<keyword id="KW-0067">ATP-binding</keyword>
<keyword id="KW-0227">DNA damage</keyword>
<keyword id="KW-0233">DNA recombination</keyword>
<keyword id="KW-0238">DNA-binding</keyword>
<keyword id="KW-0547">Nucleotide-binding</keyword>
<evidence type="ECO:0000255" key="1">
    <source>
        <dbReference type="HAMAP-Rule" id="MF_00348"/>
    </source>
</evidence>
<sequence>MSSRKKKDAEVAQASVEVNPDLDVEELEGVGRVTGAKLKERGFFTVRDVAFASVKELAEVVGNEERALQIVEAARKMLGLHSFVSALEVYERRKTIRRISTGVKALDELLGGGIETRAVTEVAGEFGSGKTQLCHQLAVMVQLPEERGGLGAKAIYIDTENTFRPERIMQIAKARGLDPDQALNNIFYARAYSSDHQMILVDQAKSIIKQNNVALLVVDSVIAHFRSEFPGRENLAERQQKLNKHVADLLRLADAYDVAVVITNQVMAQPDVFFGNPLRPAGGNILAHGATYRLWLRKSKENIRIAKIFDSPYHPEGEVSFRITEEGLVD</sequence>
<gene>
    <name evidence="1" type="primary">radA</name>
    <name type="ordered locus">Tneu_1953</name>
</gene>
<feature type="chain" id="PRO_1000120513" description="DNA repair and recombination protein RadA">
    <location>
        <begin position="1"/>
        <end position="330"/>
    </location>
</feature>
<feature type="binding site" evidence="1">
    <location>
        <begin position="124"/>
        <end position="131"/>
    </location>
    <ligand>
        <name>ATP</name>
        <dbReference type="ChEBI" id="CHEBI:30616"/>
    </ligand>
</feature>
<name>RADA_PYRNV</name>
<proteinExistence type="inferred from homology"/>
<reference key="1">
    <citation type="submission" date="2008-03" db="EMBL/GenBank/DDBJ databases">
        <title>Complete sequence of Thermoproteus neutrophilus V24Sta.</title>
        <authorList>
            <consortium name="US DOE Joint Genome Institute"/>
            <person name="Copeland A."/>
            <person name="Lucas S."/>
            <person name="Lapidus A."/>
            <person name="Glavina del Rio T."/>
            <person name="Dalin E."/>
            <person name="Tice H."/>
            <person name="Bruce D."/>
            <person name="Goodwin L."/>
            <person name="Pitluck S."/>
            <person name="Sims D."/>
            <person name="Brettin T."/>
            <person name="Detter J.C."/>
            <person name="Han C."/>
            <person name="Kuske C.R."/>
            <person name="Schmutz J."/>
            <person name="Larimer F."/>
            <person name="Land M."/>
            <person name="Hauser L."/>
            <person name="Kyrpides N."/>
            <person name="Mikhailova N."/>
            <person name="Biddle J.F."/>
            <person name="Zhang Z."/>
            <person name="Fitz-Gibbon S.T."/>
            <person name="Lowe T.M."/>
            <person name="Saltikov C."/>
            <person name="House C.H."/>
            <person name="Richardson P."/>
        </authorList>
    </citation>
    <scope>NUCLEOTIDE SEQUENCE [LARGE SCALE GENOMIC DNA]</scope>
    <source>
        <strain>DSM 2338 / JCM 9278 / NBRC 100436 / V24Sta</strain>
    </source>
</reference>
<dbReference type="EMBL" id="CP001014">
    <property type="protein sequence ID" value="ACB40868.1"/>
    <property type="molecule type" value="Genomic_DNA"/>
</dbReference>
<dbReference type="RefSeq" id="WP_012351287.1">
    <property type="nucleotide sequence ID" value="NC_010525.1"/>
</dbReference>
<dbReference type="SMR" id="B1YC14"/>
<dbReference type="STRING" id="444157.Tneu_1953"/>
<dbReference type="GeneID" id="6164602"/>
<dbReference type="KEGG" id="tne:Tneu_1953"/>
<dbReference type="eggNOG" id="arCOG00415">
    <property type="taxonomic scope" value="Archaea"/>
</dbReference>
<dbReference type="HOGENOM" id="CLU_041732_0_0_2"/>
<dbReference type="OrthoDB" id="31129at2157"/>
<dbReference type="Proteomes" id="UP000001694">
    <property type="component" value="Chromosome"/>
</dbReference>
<dbReference type="GO" id="GO:0005524">
    <property type="term" value="F:ATP binding"/>
    <property type="evidence" value="ECO:0007669"/>
    <property type="project" value="UniProtKB-UniRule"/>
</dbReference>
<dbReference type="GO" id="GO:0016887">
    <property type="term" value="F:ATP hydrolysis activity"/>
    <property type="evidence" value="ECO:0007669"/>
    <property type="project" value="InterPro"/>
</dbReference>
<dbReference type="GO" id="GO:0140664">
    <property type="term" value="F:ATP-dependent DNA damage sensor activity"/>
    <property type="evidence" value="ECO:0007669"/>
    <property type="project" value="InterPro"/>
</dbReference>
<dbReference type="GO" id="GO:0003684">
    <property type="term" value="F:damaged DNA binding"/>
    <property type="evidence" value="ECO:0007669"/>
    <property type="project" value="UniProtKB-UniRule"/>
</dbReference>
<dbReference type="GO" id="GO:0006310">
    <property type="term" value="P:DNA recombination"/>
    <property type="evidence" value="ECO:0007669"/>
    <property type="project" value="UniProtKB-UniRule"/>
</dbReference>
<dbReference type="GO" id="GO:0006281">
    <property type="term" value="P:DNA repair"/>
    <property type="evidence" value="ECO:0007669"/>
    <property type="project" value="UniProtKB-UniRule"/>
</dbReference>
<dbReference type="CDD" id="cd19515">
    <property type="entry name" value="archRadA"/>
    <property type="match status" value="1"/>
</dbReference>
<dbReference type="FunFam" id="3.40.50.300:FF:002052">
    <property type="entry name" value="DNA repair protein RAD51 homolog"/>
    <property type="match status" value="1"/>
</dbReference>
<dbReference type="Gene3D" id="1.10.150.20">
    <property type="entry name" value="5' to 3' exonuclease, C-terminal subdomain"/>
    <property type="match status" value="1"/>
</dbReference>
<dbReference type="Gene3D" id="3.40.50.300">
    <property type="entry name" value="P-loop containing nucleotide triphosphate hydrolases"/>
    <property type="match status" value="1"/>
</dbReference>
<dbReference type="HAMAP" id="MF_00348">
    <property type="entry name" value="RadA_arch"/>
    <property type="match status" value="1"/>
</dbReference>
<dbReference type="InterPro" id="IPR003593">
    <property type="entry name" value="AAA+_ATPase"/>
</dbReference>
<dbReference type="InterPro" id="IPR013632">
    <property type="entry name" value="DNA_recomb/repair_Rad51_C"/>
</dbReference>
<dbReference type="InterPro" id="IPR011938">
    <property type="entry name" value="DNA_recomb/repair_RadA"/>
</dbReference>
<dbReference type="InterPro" id="IPR016467">
    <property type="entry name" value="DNA_recomb/repair_RecA-like"/>
</dbReference>
<dbReference type="InterPro" id="IPR010995">
    <property type="entry name" value="DNA_repair_Rad51/TF_NusA_a-hlx"/>
</dbReference>
<dbReference type="InterPro" id="IPR027417">
    <property type="entry name" value="P-loop_NTPase"/>
</dbReference>
<dbReference type="InterPro" id="IPR020588">
    <property type="entry name" value="RecA_ATP-bd"/>
</dbReference>
<dbReference type="InterPro" id="IPR020587">
    <property type="entry name" value="RecA_monomer-monomer_interface"/>
</dbReference>
<dbReference type="NCBIfam" id="NF003301">
    <property type="entry name" value="PRK04301.1"/>
    <property type="match status" value="1"/>
</dbReference>
<dbReference type="NCBIfam" id="TIGR02236">
    <property type="entry name" value="recomb_radA"/>
    <property type="match status" value="1"/>
</dbReference>
<dbReference type="PANTHER" id="PTHR22942:SF30">
    <property type="entry name" value="MEIOTIC RECOMBINATION PROTEIN DMC1_LIM15 HOMOLOG"/>
    <property type="match status" value="1"/>
</dbReference>
<dbReference type="PANTHER" id="PTHR22942">
    <property type="entry name" value="RECA/RAD51/RADA DNA STRAND-PAIRING FAMILY MEMBER"/>
    <property type="match status" value="1"/>
</dbReference>
<dbReference type="Pfam" id="PF14520">
    <property type="entry name" value="HHH_5"/>
    <property type="match status" value="1"/>
</dbReference>
<dbReference type="Pfam" id="PF08423">
    <property type="entry name" value="Rad51"/>
    <property type="match status" value="1"/>
</dbReference>
<dbReference type="PIRSF" id="PIRSF005856">
    <property type="entry name" value="Rad51"/>
    <property type="match status" value="1"/>
</dbReference>
<dbReference type="SMART" id="SM00382">
    <property type="entry name" value="AAA"/>
    <property type="match status" value="1"/>
</dbReference>
<dbReference type="SUPFAM" id="SSF52540">
    <property type="entry name" value="P-loop containing nucleoside triphosphate hydrolases"/>
    <property type="match status" value="1"/>
</dbReference>
<dbReference type="SUPFAM" id="SSF47794">
    <property type="entry name" value="Rad51 N-terminal domain-like"/>
    <property type="match status" value="1"/>
</dbReference>
<dbReference type="PROSITE" id="PS50162">
    <property type="entry name" value="RECA_2"/>
    <property type="match status" value="1"/>
</dbReference>
<dbReference type="PROSITE" id="PS50163">
    <property type="entry name" value="RECA_3"/>
    <property type="match status" value="1"/>
</dbReference>
<organism>
    <name type="scientific">Pyrobaculum neutrophilum (strain DSM 2338 / JCM 9278 / NBRC 100436 / V24Sta)</name>
    <name type="common">Thermoproteus neutrophilus</name>
    <dbReference type="NCBI Taxonomy" id="444157"/>
    <lineage>
        <taxon>Archaea</taxon>
        <taxon>Thermoproteota</taxon>
        <taxon>Thermoprotei</taxon>
        <taxon>Thermoproteales</taxon>
        <taxon>Thermoproteaceae</taxon>
        <taxon>Pyrobaculum</taxon>
    </lineage>
</organism>
<comment type="function">
    <text evidence="1">Involved in DNA repair and in homologous recombination. Binds and assemble on single-stranded DNA to form a nucleoprotein filament. Hydrolyzes ATP in a ssDNA-dependent manner and promotes DNA strand exchange between homologous DNA molecules.</text>
</comment>
<comment type="similarity">
    <text evidence="1">Belongs to the eukaryotic RecA-like protein family.</text>
</comment>
<accession>B1YC14</accession>
<protein>
    <recommendedName>
        <fullName evidence="1">DNA repair and recombination protein RadA</fullName>
    </recommendedName>
</protein>